<proteinExistence type="inferred from homology"/>
<reference key="1">
    <citation type="journal article" date="2007" name="PLoS ONE">
        <title>Genome sequencing shows that European isolates of Francisella tularensis subspecies tularensis are almost identical to US laboratory strain Schu S4.</title>
        <authorList>
            <person name="Chaudhuri R.R."/>
            <person name="Ren C.-P."/>
            <person name="Desmond L."/>
            <person name="Vincent G.A."/>
            <person name="Silman N.J."/>
            <person name="Brehm J.K."/>
            <person name="Elmore M.J."/>
            <person name="Hudson M.J."/>
            <person name="Forsman M."/>
            <person name="Isherwood K.E."/>
            <person name="Gurycova D."/>
            <person name="Minton N.P."/>
            <person name="Titball R.W."/>
            <person name="Pallen M.J."/>
            <person name="Vipond R."/>
        </authorList>
    </citation>
    <scope>NUCLEOTIDE SEQUENCE [LARGE SCALE GENOMIC DNA]</scope>
    <source>
        <strain>FSC 198</strain>
    </source>
</reference>
<evidence type="ECO:0000255" key="1">
    <source>
        <dbReference type="HAMAP-Rule" id="MF_00323"/>
    </source>
</evidence>
<sequence>MQQYSCKYNKQAILLVNLGTPDNYDTKSIKRYLKEFLSDPRVIEANPVLWKIILNLIILPIRAKKNVHTYKTVWNKQHNKSPLLFYTENLADKLDKKLDNYIVDYAMRYGNPSIESKIKSLQDQGATEIIIFPLYPQYSATTTATVYDEVYRVLSKLRWQPTIKGINPYYDNKFHIQTISQQIKEHLKKLDSTPDTVLFSFHGLPKEYFDKGDPYYCHCYKTYRLVKEELQNEYPNIDFELSFQSRFGPKKWLEPYTTVKLEEFTKQNKSVVVIAPGFSADCLETLEELAISEKENFIKKGGKEFSLIPCLNDSNQHVDMLYNIIDEEICLKK</sequence>
<feature type="chain" id="PRO_1000019299" description="Ferrochelatase">
    <location>
        <begin position="1"/>
        <end position="333"/>
    </location>
</feature>
<feature type="binding site" evidence="1">
    <location>
        <position position="202"/>
    </location>
    <ligand>
        <name>Fe cation</name>
        <dbReference type="ChEBI" id="CHEBI:24875"/>
    </ligand>
</feature>
<feature type="binding site" evidence="1">
    <location>
        <position position="284"/>
    </location>
    <ligand>
        <name>Fe cation</name>
        <dbReference type="ChEBI" id="CHEBI:24875"/>
    </ligand>
</feature>
<comment type="function">
    <text evidence="1">Catalyzes the ferrous insertion into protoporphyrin IX.</text>
</comment>
<comment type="catalytic activity">
    <reaction evidence="1">
        <text>heme b + 2 H(+) = protoporphyrin IX + Fe(2+)</text>
        <dbReference type="Rhea" id="RHEA:22584"/>
        <dbReference type="ChEBI" id="CHEBI:15378"/>
        <dbReference type="ChEBI" id="CHEBI:29033"/>
        <dbReference type="ChEBI" id="CHEBI:57306"/>
        <dbReference type="ChEBI" id="CHEBI:60344"/>
        <dbReference type="EC" id="4.98.1.1"/>
    </reaction>
</comment>
<comment type="pathway">
    <text evidence="1">Porphyrin-containing compound metabolism; protoheme biosynthesis; protoheme from protoporphyrin-IX: step 1/1.</text>
</comment>
<comment type="subcellular location">
    <subcellularLocation>
        <location evidence="1">Cytoplasm</location>
    </subcellularLocation>
</comment>
<comment type="similarity">
    <text evidence="1">Belongs to the ferrochelatase family.</text>
</comment>
<gene>
    <name evidence="1" type="primary">hemH</name>
    <name type="ordered locus">FTF1138</name>
</gene>
<protein>
    <recommendedName>
        <fullName evidence="1">Ferrochelatase</fullName>
        <ecNumber evidence="1">4.98.1.1</ecNumber>
    </recommendedName>
    <alternativeName>
        <fullName evidence="1">Heme synthase</fullName>
    </alternativeName>
    <alternativeName>
        <fullName evidence="1">Protoheme ferro-lyase</fullName>
    </alternativeName>
</protein>
<keyword id="KW-0963">Cytoplasm</keyword>
<keyword id="KW-0350">Heme biosynthesis</keyword>
<keyword id="KW-0408">Iron</keyword>
<keyword id="KW-0456">Lyase</keyword>
<keyword id="KW-0479">Metal-binding</keyword>
<keyword id="KW-0627">Porphyrin biosynthesis</keyword>
<name>HEMH_FRAT1</name>
<dbReference type="EC" id="4.98.1.1" evidence="1"/>
<dbReference type="EMBL" id="AM286280">
    <property type="protein sequence ID" value="CAL09154.1"/>
    <property type="molecule type" value="Genomic_DNA"/>
</dbReference>
<dbReference type="RefSeq" id="WP_003021335.1">
    <property type="nucleotide sequence ID" value="NC_008245.1"/>
</dbReference>
<dbReference type="SMR" id="Q14H85"/>
<dbReference type="KEGG" id="ftf:FTF1138"/>
<dbReference type="HOGENOM" id="CLU_018884_0_0_6"/>
<dbReference type="UniPathway" id="UPA00252">
    <property type="reaction ID" value="UER00325"/>
</dbReference>
<dbReference type="GO" id="GO:0005737">
    <property type="term" value="C:cytoplasm"/>
    <property type="evidence" value="ECO:0007669"/>
    <property type="project" value="UniProtKB-SubCell"/>
</dbReference>
<dbReference type="GO" id="GO:0004325">
    <property type="term" value="F:ferrochelatase activity"/>
    <property type="evidence" value="ECO:0007669"/>
    <property type="project" value="UniProtKB-UniRule"/>
</dbReference>
<dbReference type="GO" id="GO:0046872">
    <property type="term" value="F:metal ion binding"/>
    <property type="evidence" value="ECO:0007669"/>
    <property type="project" value="UniProtKB-KW"/>
</dbReference>
<dbReference type="GO" id="GO:0006783">
    <property type="term" value="P:heme biosynthetic process"/>
    <property type="evidence" value="ECO:0007669"/>
    <property type="project" value="UniProtKB-UniRule"/>
</dbReference>
<dbReference type="CDD" id="cd00419">
    <property type="entry name" value="Ferrochelatase_C"/>
    <property type="match status" value="1"/>
</dbReference>
<dbReference type="CDD" id="cd03411">
    <property type="entry name" value="Ferrochelatase_N"/>
    <property type="match status" value="1"/>
</dbReference>
<dbReference type="FunFam" id="3.40.50.1400:FF:000002">
    <property type="entry name" value="Ferrochelatase"/>
    <property type="match status" value="1"/>
</dbReference>
<dbReference type="Gene3D" id="3.40.50.1400">
    <property type="match status" value="2"/>
</dbReference>
<dbReference type="HAMAP" id="MF_00323">
    <property type="entry name" value="Ferrochelatase"/>
    <property type="match status" value="1"/>
</dbReference>
<dbReference type="InterPro" id="IPR001015">
    <property type="entry name" value="Ferrochelatase"/>
</dbReference>
<dbReference type="InterPro" id="IPR019772">
    <property type="entry name" value="Ferrochelatase_AS"/>
</dbReference>
<dbReference type="InterPro" id="IPR033644">
    <property type="entry name" value="Ferrochelatase_C"/>
</dbReference>
<dbReference type="InterPro" id="IPR033659">
    <property type="entry name" value="Ferrochelatase_N"/>
</dbReference>
<dbReference type="NCBIfam" id="TIGR00109">
    <property type="entry name" value="hemH"/>
    <property type="match status" value="1"/>
</dbReference>
<dbReference type="PANTHER" id="PTHR11108">
    <property type="entry name" value="FERROCHELATASE"/>
    <property type="match status" value="1"/>
</dbReference>
<dbReference type="PANTHER" id="PTHR11108:SF1">
    <property type="entry name" value="FERROCHELATASE, MITOCHONDRIAL"/>
    <property type="match status" value="1"/>
</dbReference>
<dbReference type="Pfam" id="PF00762">
    <property type="entry name" value="Ferrochelatase"/>
    <property type="match status" value="1"/>
</dbReference>
<dbReference type="SUPFAM" id="SSF53800">
    <property type="entry name" value="Chelatase"/>
    <property type="match status" value="1"/>
</dbReference>
<dbReference type="PROSITE" id="PS00534">
    <property type="entry name" value="FERROCHELATASE"/>
    <property type="match status" value="1"/>
</dbReference>
<accession>Q14H85</accession>
<organism>
    <name type="scientific">Francisella tularensis subsp. tularensis (strain FSC 198)</name>
    <dbReference type="NCBI Taxonomy" id="393115"/>
    <lineage>
        <taxon>Bacteria</taxon>
        <taxon>Pseudomonadati</taxon>
        <taxon>Pseudomonadota</taxon>
        <taxon>Gammaproteobacteria</taxon>
        <taxon>Thiotrichales</taxon>
        <taxon>Francisellaceae</taxon>
        <taxon>Francisella</taxon>
    </lineage>
</organism>